<organism>
    <name type="scientific">Bordetella petrii (strain ATCC BAA-461 / DSM 12804 / CCUG 43448)</name>
    <dbReference type="NCBI Taxonomy" id="340100"/>
    <lineage>
        <taxon>Bacteria</taxon>
        <taxon>Pseudomonadati</taxon>
        <taxon>Pseudomonadota</taxon>
        <taxon>Betaproteobacteria</taxon>
        <taxon>Burkholderiales</taxon>
        <taxon>Alcaligenaceae</taxon>
        <taxon>Bordetella</taxon>
    </lineage>
</organism>
<gene>
    <name evidence="1" type="primary">atpA</name>
    <name type="ordered locus">Bpet0340</name>
</gene>
<feature type="chain" id="PRO_0000339018" description="ATP synthase subunit alpha">
    <location>
        <begin position="1"/>
        <end position="513"/>
    </location>
</feature>
<feature type="binding site" evidence="1">
    <location>
        <begin position="169"/>
        <end position="176"/>
    </location>
    <ligand>
        <name>ATP</name>
        <dbReference type="ChEBI" id="CHEBI:30616"/>
    </ligand>
</feature>
<feature type="site" description="Required for activity" evidence="1">
    <location>
        <position position="373"/>
    </location>
</feature>
<reference key="1">
    <citation type="journal article" date="2008" name="BMC Genomics">
        <title>The missing link: Bordetella petrii is endowed with both the metabolic versatility of environmental bacteria and virulence traits of pathogenic Bordetellae.</title>
        <authorList>
            <person name="Gross R."/>
            <person name="Guzman C.A."/>
            <person name="Sebaihia M."/>
            <person name="Martin dos Santos V.A.P."/>
            <person name="Pieper D.H."/>
            <person name="Koebnik R."/>
            <person name="Lechner M."/>
            <person name="Bartels D."/>
            <person name="Buhrmester J."/>
            <person name="Choudhuri J.V."/>
            <person name="Ebensen T."/>
            <person name="Gaigalat L."/>
            <person name="Herrmann S."/>
            <person name="Khachane A.N."/>
            <person name="Larisch C."/>
            <person name="Link S."/>
            <person name="Linke B."/>
            <person name="Meyer F."/>
            <person name="Mormann S."/>
            <person name="Nakunst D."/>
            <person name="Rueckert C."/>
            <person name="Schneiker-Bekel S."/>
            <person name="Schulze K."/>
            <person name="Voerholter F.-J."/>
            <person name="Yevsa T."/>
            <person name="Engle J.T."/>
            <person name="Goldman W.E."/>
            <person name="Puehler A."/>
            <person name="Goebel U.B."/>
            <person name="Goesmann A."/>
            <person name="Bloecker H."/>
            <person name="Kaiser O."/>
            <person name="Martinez-Arias R."/>
        </authorList>
    </citation>
    <scope>NUCLEOTIDE SEQUENCE [LARGE SCALE GENOMIC DNA]</scope>
    <source>
        <strain>ATCC BAA-461 / DSM 12804 / CCUG 43448</strain>
    </source>
</reference>
<protein>
    <recommendedName>
        <fullName evidence="1">ATP synthase subunit alpha</fullName>
        <ecNumber evidence="1">7.1.2.2</ecNumber>
    </recommendedName>
    <alternativeName>
        <fullName evidence="1">ATP synthase F1 sector subunit alpha</fullName>
    </alternativeName>
    <alternativeName>
        <fullName evidence="1">F-ATPase subunit alpha</fullName>
    </alternativeName>
</protein>
<proteinExistence type="inferred from homology"/>
<dbReference type="EC" id="7.1.2.2" evidence="1"/>
<dbReference type="EMBL" id="AM902716">
    <property type="protein sequence ID" value="CAP40672.1"/>
    <property type="molecule type" value="Genomic_DNA"/>
</dbReference>
<dbReference type="SMR" id="A9HY40"/>
<dbReference type="STRING" id="94624.Bpet0340"/>
<dbReference type="KEGG" id="bpt:Bpet0340"/>
<dbReference type="eggNOG" id="COG0056">
    <property type="taxonomic scope" value="Bacteria"/>
</dbReference>
<dbReference type="Proteomes" id="UP000001225">
    <property type="component" value="Chromosome"/>
</dbReference>
<dbReference type="GO" id="GO:0005886">
    <property type="term" value="C:plasma membrane"/>
    <property type="evidence" value="ECO:0007669"/>
    <property type="project" value="UniProtKB-SubCell"/>
</dbReference>
<dbReference type="GO" id="GO:0045259">
    <property type="term" value="C:proton-transporting ATP synthase complex"/>
    <property type="evidence" value="ECO:0007669"/>
    <property type="project" value="UniProtKB-KW"/>
</dbReference>
<dbReference type="GO" id="GO:0043531">
    <property type="term" value="F:ADP binding"/>
    <property type="evidence" value="ECO:0007669"/>
    <property type="project" value="TreeGrafter"/>
</dbReference>
<dbReference type="GO" id="GO:0005524">
    <property type="term" value="F:ATP binding"/>
    <property type="evidence" value="ECO:0007669"/>
    <property type="project" value="UniProtKB-UniRule"/>
</dbReference>
<dbReference type="GO" id="GO:0046933">
    <property type="term" value="F:proton-transporting ATP synthase activity, rotational mechanism"/>
    <property type="evidence" value="ECO:0007669"/>
    <property type="project" value="UniProtKB-UniRule"/>
</dbReference>
<dbReference type="CDD" id="cd18113">
    <property type="entry name" value="ATP-synt_F1_alpha_C"/>
    <property type="match status" value="1"/>
</dbReference>
<dbReference type="CDD" id="cd18116">
    <property type="entry name" value="ATP-synt_F1_alpha_N"/>
    <property type="match status" value="1"/>
</dbReference>
<dbReference type="CDD" id="cd01132">
    <property type="entry name" value="F1-ATPase_alpha_CD"/>
    <property type="match status" value="1"/>
</dbReference>
<dbReference type="FunFam" id="1.20.150.20:FF:000001">
    <property type="entry name" value="ATP synthase subunit alpha"/>
    <property type="match status" value="1"/>
</dbReference>
<dbReference type="FunFam" id="2.40.30.20:FF:000001">
    <property type="entry name" value="ATP synthase subunit alpha"/>
    <property type="match status" value="1"/>
</dbReference>
<dbReference type="FunFam" id="3.40.50.300:FF:000002">
    <property type="entry name" value="ATP synthase subunit alpha"/>
    <property type="match status" value="1"/>
</dbReference>
<dbReference type="Gene3D" id="2.40.30.20">
    <property type="match status" value="1"/>
</dbReference>
<dbReference type="Gene3D" id="1.20.150.20">
    <property type="entry name" value="ATP synthase alpha/beta chain, C-terminal domain"/>
    <property type="match status" value="1"/>
</dbReference>
<dbReference type="Gene3D" id="3.40.50.300">
    <property type="entry name" value="P-loop containing nucleotide triphosphate hydrolases"/>
    <property type="match status" value="1"/>
</dbReference>
<dbReference type="HAMAP" id="MF_01346">
    <property type="entry name" value="ATP_synth_alpha_bact"/>
    <property type="match status" value="1"/>
</dbReference>
<dbReference type="InterPro" id="IPR023366">
    <property type="entry name" value="ATP_synth_asu-like_sf"/>
</dbReference>
<dbReference type="InterPro" id="IPR000793">
    <property type="entry name" value="ATP_synth_asu_C"/>
</dbReference>
<dbReference type="InterPro" id="IPR038376">
    <property type="entry name" value="ATP_synth_asu_C_sf"/>
</dbReference>
<dbReference type="InterPro" id="IPR033732">
    <property type="entry name" value="ATP_synth_F1_a_nt-bd_dom"/>
</dbReference>
<dbReference type="InterPro" id="IPR005294">
    <property type="entry name" value="ATP_synth_F1_asu"/>
</dbReference>
<dbReference type="InterPro" id="IPR020003">
    <property type="entry name" value="ATPase_a/bsu_AS"/>
</dbReference>
<dbReference type="InterPro" id="IPR004100">
    <property type="entry name" value="ATPase_F1/V1/A1_a/bsu_N"/>
</dbReference>
<dbReference type="InterPro" id="IPR036121">
    <property type="entry name" value="ATPase_F1/V1/A1_a/bsu_N_sf"/>
</dbReference>
<dbReference type="InterPro" id="IPR000194">
    <property type="entry name" value="ATPase_F1/V1/A1_a/bsu_nucl-bd"/>
</dbReference>
<dbReference type="InterPro" id="IPR027417">
    <property type="entry name" value="P-loop_NTPase"/>
</dbReference>
<dbReference type="NCBIfam" id="TIGR00962">
    <property type="entry name" value="atpA"/>
    <property type="match status" value="1"/>
</dbReference>
<dbReference type="NCBIfam" id="NF009884">
    <property type="entry name" value="PRK13343.1"/>
    <property type="match status" value="1"/>
</dbReference>
<dbReference type="PANTHER" id="PTHR48082">
    <property type="entry name" value="ATP SYNTHASE SUBUNIT ALPHA, MITOCHONDRIAL"/>
    <property type="match status" value="1"/>
</dbReference>
<dbReference type="PANTHER" id="PTHR48082:SF2">
    <property type="entry name" value="ATP SYNTHASE SUBUNIT ALPHA, MITOCHONDRIAL"/>
    <property type="match status" value="1"/>
</dbReference>
<dbReference type="Pfam" id="PF00006">
    <property type="entry name" value="ATP-synt_ab"/>
    <property type="match status" value="1"/>
</dbReference>
<dbReference type="Pfam" id="PF00306">
    <property type="entry name" value="ATP-synt_ab_C"/>
    <property type="match status" value="1"/>
</dbReference>
<dbReference type="Pfam" id="PF02874">
    <property type="entry name" value="ATP-synt_ab_N"/>
    <property type="match status" value="1"/>
</dbReference>
<dbReference type="PIRSF" id="PIRSF039088">
    <property type="entry name" value="F_ATPase_subunit_alpha"/>
    <property type="match status" value="1"/>
</dbReference>
<dbReference type="SUPFAM" id="SSF47917">
    <property type="entry name" value="C-terminal domain of alpha and beta subunits of F1 ATP synthase"/>
    <property type="match status" value="1"/>
</dbReference>
<dbReference type="SUPFAM" id="SSF50615">
    <property type="entry name" value="N-terminal domain of alpha and beta subunits of F1 ATP synthase"/>
    <property type="match status" value="1"/>
</dbReference>
<dbReference type="SUPFAM" id="SSF52540">
    <property type="entry name" value="P-loop containing nucleoside triphosphate hydrolases"/>
    <property type="match status" value="1"/>
</dbReference>
<dbReference type="PROSITE" id="PS00152">
    <property type="entry name" value="ATPASE_ALPHA_BETA"/>
    <property type="match status" value="1"/>
</dbReference>
<comment type="function">
    <text evidence="1">Produces ATP from ADP in the presence of a proton gradient across the membrane. The alpha chain is a regulatory subunit.</text>
</comment>
<comment type="catalytic activity">
    <reaction evidence="1">
        <text>ATP + H2O + 4 H(+)(in) = ADP + phosphate + 5 H(+)(out)</text>
        <dbReference type="Rhea" id="RHEA:57720"/>
        <dbReference type="ChEBI" id="CHEBI:15377"/>
        <dbReference type="ChEBI" id="CHEBI:15378"/>
        <dbReference type="ChEBI" id="CHEBI:30616"/>
        <dbReference type="ChEBI" id="CHEBI:43474"/>
        <dbReference type="ChEBI" id="CHEBI:456216"/>
        <dbReference type="EC" id="7.1.2.2"/>
    </reaction>
</comment>
<comment type="subunit">
    <text evidence="1">F-type ATPases have 2 components, CF(1) - the catalytic core - and CF(0) - the membrane proton channel. CF(1) has five subunits: alpha(3), beta(3), gamma(1), delta(1), epsilon(1). CF(0) has three main subunits: a(1), b(2) and c(9-12). The alpha and beta chains form an alternating ring which encloses part of the gamma chain. CF(1) is attached to CF(0) by a central stalk formed by the gamma and epsilon chains, while a peripheral stalk is formed by the delta and b chains.</text>
</comment>
<comment type="subcellular location">
    <subcellularLocation>
        <location evidence="1">Cell inner membrane</location>
        <topology evidence="1">Peripheral membrane protein</topology>
    </subcellularLocation>
</comment>
<comment type="similarity">
    <text evidence="1">Belongs to the ATPase alpha/beta chains family.</text>
</comment>
<evidence type="ECO:0000255" key="1">
    <source>
        <dbReference type="HAMAP-Rule" id="MF_01346"/>
    </source>
</evidence>
<sequence>MQLNPSEISELLKSRIEGLGASADIRTQGTVVSVTDGITRIHGLSDVMQGEMLEFPNNVFGVALNLERDSVGAVILGDYTGVSEGDQVKTTGRILEVPVGPELKGRVVNTLGVPIDGKGPIDTKETDIIEKVAPGVIARRSVSQPLQTGIKAIDSMVPIGRGQRELIIGDRQTGKTAVAVDTIISQKGKGVTCVYVAIGQKASTINNVVRKLEEHGAMEYTIVVAASASDSAAMQYLAAYAGCTMGEYFRDRGEDALIIYDDLTKQAWAYRQVSLLLRRPPGREAYPGDVFYLHSRLLERAARVNEEYVEKFTNGAVKGKTGSLTALPIIETQAGDVSAFVPTNVISITDGQIFLETDLFNAGVRPAINAGISVSRVGGAAQTKVIKKLSGGIRTDLAQYRELAAFAQFASDLDDATRRQLERGKRVVELLKQPQYQPLQVWELAVTLYTVNNGYLDDVDVAQVLAFEKSLKDQLKAKHAALIQRIEDTKELSKDDEAELAAAIQDFKKHGAF</sequence>
<keyword id="KW-0066">ATP synthesis</keyword>
<keyword id="KW-0067">ATP-binding</keyword>
<keyword id="KW-0997">Cell inner membrane</keyword>
<keyword id="KW-1003">Cell membrane</keyword>
<keyword id="KW-0139">CF(1)</keyword>
<keyword id="KW-0375">Hydrogen ion transport</keyword>
<keyword id="KW-0406">Ion transport</keyword>
<keyword id="KW-0472">Membrane</keyword>
<keyword id="KW-0547">Nucleotide-binding</keyword>
<keyword id="KW-1278">Translocase</keyword>
<keyword id="KW-0813">Transport</keyword>
<name>ATPA_BORPD</name>
<accession>A9HY40</accession>